<sequence length="591" mass="64737">MKKISLPKIGIRPVIDGRRMGVRESLEAQTMNMAKATAALISEKLRHACGARVECVIADTCIAGMAESAACEEKFSSQNVGVTITVTPCWCYGSETIDMDPLRPKAIWGFNGTERPGAVYLAAALAAHSQKGIPAFSIYGHDVQDADDTSIPADVEEKLLRFARAGLAVASMKGKSYLSLGGVSMGIAGSIVDHNFFESWLGMKVQAVDMTELRRRIDQKIYDETELEMALAWADKHFRYGEDQNAEQYKRNETQSRAVLKESLLMAMCIRDMMQGNPKLAEKGLVEESLGYNAIAAGFQGQRHWTDQYPNGDTAEALLNSSFDWNGVREPFVVATENDSLNGVAMLMGHQLTGTAQVFADVRTYWSPDAVERVTGQPLTGRAEHGIIHLINSGSAALDGSCQQRDAQGNPTMKPHWEIEQNEADACLAATEWCPAIHEYFRGGGFSSRFLTEGGVPFTMTRVNIIKGLGPVLQIAEGWSVALPKAMHDQLDARTNSTWPTTWFAPRLTGKGPFSDVYSVMANWGANHGVLTIGHVGADFITLAAMLRIPVCMHNVEAAKIYRPSAWAAHGMDIEGQDYRACQNYGPLYKR</sequence>
<keyword id="KW-0119">Carbohydrate metabolism</keyword>
<keyword id="KW-0963">Cytoplasm</keyword>
<keyword id="KW-0294">Fucose metabolism</keyword>
<keyword id="KW-0413">Isomerase</keyword>
<keyword id="KW-0464">Manganese</keyword>
<keyword id="KW-0479">Metal-binding</keyword>
<accession>B5XUY5</accession>
<protein>
    <recommendedName>
        <fullName evidence="1">L-fucose isomerase</fullName>
        <ecNumber evidence="1">5.3.1.25</ecNumber>
    </recommendedName>
    <alternativeName>
        <fullName evidence="1">6-deoxy-L-galactose isomerase</fullName>
    </alternativeName>
    <alternativeName>
        <fullName>FucIase</fullName>
    </alternativeName>
</protein>
<dbReference type="EC" id="5.3.1.25" evidence="1"/>
<dbReference type="EMBL" id="CP000964">
    <property type="protein sequence ID" value="ACI07585.1"/>
    <property type="molecule type" value="Genomic_DNA"/>
</dbReference>
<dbReference type="SMR" id="B5XUY5"/>
<dbReference type="KEGG" id="kpe:KPK_0964"/>
<dbReference type="HOGENOM" id="CLU_033326_1_0_6"/>
<dbReference type="UniPathway" id="UPA00563">
    <property type="reaction ID" value="UER00624"/>
</dbReference>
<dbReference type="Proteomes" id="UP000001734">
    <property type="component" value="Chromosome"/>
</dbReference>
<dbReference type="GO" id="GO:0005737">
    <property type="term" value="C:cytoplasm"/>
    <property type="evidence" value="ECO:0007669"/>
    <property type="project" value="UniProtKB-SubCell"/>
</dbReference>
<dbReference type="GO" id="GO:0008790">
    <property type="term" value="F:arabinose isomerase activity"/>
    <property type="evidence" value="ECO:0007669"/>
    <property type="project" value="TreeGrafter"/>
</dbReference>
<dbReference type="GO" id="GO:0008736">
    <property type="term" value="F:L-fucose isomerase activity"/>
    <property type="evidence" value="ECO:0007669"/>
    <property type="project" value="UniProtKB-UniRule"/>
</dbReference>
<dbReference type="GO" id="GO:0030145">
    <property type="term" value="F:manganese ion binding"/>
    <property type="evidence" value="ECO:0007669"/>
    <property type="project" value="UniProtKB-UniRule"/>
</dbReference>
<dbReference type="GO" id="GO:0019571">
    <property type="term" value="P:D-arabinose catabolic process"/>
    <property type="evidence" value="ECO:0007669"/>
    <property type="project" value="TreeGrafter"/>
</dbReference>
<dbReference type="GO" id="GO:0042355">
    <property type="term" value="P:L-fucose catabolic process"/>
    <property type="evidence" value="ECO:0007669"/>
    <property type="project" value="UniProtKB-UniRule"/>
</dbReference>
<dbReference type="FunFam" id="3.20.14.10:FF:000001">
    <property type="entry name" value="L-fucose isomerase"/>
    <property type="match status" value="1"/>
</dbReference>
<dbReference type="FunFam" id="3.40.275.10:FF:000001">
    <property type="entry name" value="L-fucose isomerase"/>
    <property type="match status" value="1"/>
</dbReference>
<dbReference type="FunFam" id="3.40.50.1070:FF:000001">
    <property type="entry name" value="L-fucose isomerase"/>
    <property type="match status" value="1"/>
</dbReference>
<dbReference type="Gene3D" id="3.40.50.1070">
    <property type="match status" value="1"/>
</dbReference>
<dbReference type="Gene3D" id="3.40.275.10">
    <property type="entry name" value="L-fucose Isomerase, Chain A, domain 2"/>
    <property type="match status" value="1"/>
</dbReference>
<dbReference type="Gene3D" id="3.20.14.10">
    <property type="entry name" value="L-fucose/L-arabinose isomerase, C-terminal"/>
    <property type="match status" value="1"/>
</dbReference>
<dbReference type="HAMAP" id="MF_01254">
    <property type="entry name" value="Fucose_iso"/>
    <property type="match status" value="1"/>
</dbReference>
<dbReference type="InterPro" id="IPR004216">
    <property type="entry name" value="Fuc/Ara_isomerase_C"/>
</dbReference>
<dbReference type="InterPro" id="IPR038393">
    <property type="entry name" value="Fuc_iso_dom3_sf"/>
</dbReference>
<dbReference type="InterPro" id="IPR015888">
    <property type="entry name" value="Fuc_isomerase_C"/>
</dbReference>
<dbReference type="InterPro" id="IPR038391">
    <property type="entry name" value="Fucose_iso_dom1_sf"/>
</dbReference>
<dbReference type="InterPro" id="IPR012888">
    <property type="entry name" value="Fucose_iso_N1"/>
</dbReference>
<dbReference type="InterPro" id="IPR005763">
    <property type="entry name" value="Fucose_isomerase"/>
</dbReference>
<dbReference type="InterPro" id="IPR038392">
    <property type="entry name" value="Fucose_isomerase_dom2_sf"/>
</dbReference>
<dbReference type="InterPro" id="IPR009015">
    <property type="entry name" value="Fucose_isomerase_N/cen_sf"/>
</dbReference>
<dbReference type="InterPro" id="IPR012889">
    <property type="entry name" value="Fucose_isomerase_N2"/>
</dbReference>
<dbReference type="NCBIfam" id="TIGR01089">
    <property type="entry name" value="fucI"/>
    <property type="match status" value="1"/>
</dbReference>
<dbReference type="NCBIfam" id="NF008220">
    <property type="entry name" value="PRK10991.1"/>
    <property type="match status" value="1"/>
</dbReference>
<dbReference type="PANTHER" id="PTHR37840">
    <property type="entry name" value="L-FUCOSE ISOMERASE"/>
    <property type="match status" value="1"/>
</dbReference>
<dbReference type="PANTHER" id="PTHR37840:SF1">
    <property type="entry name" value="L-FUCOSE ISOMERASE"/>
    <property type="match status" value="1"/>
</dbReference>
<dbReference type="Pfam" id="PF02952">
    <property type="entry name" value="Fucose_iso_C"/>
    <property type="match status" value="1"/>
</dbReference>
<dbReference type="Pfam" id="PF07881">
    <property type="entry name" value="Fucose_iso_N1"/>
    <property type="match status" value="1"/>
</dbReference>
<dbReference type="Pfam" id="PF07882">
    <property type="entry name" value="Fucose_iso_N2"/>
    <property type="match status" value="1"/>
</dbReference>
<dbReference type="SUPFAM" id="SSF50443">
    <property type="entry name" value="FucI/AraA C-terminal domain-like"/>
    <property type="match status" value="1"/>
</dbReference>
<dbReference type="SUPFAM" id="SSF53743">
    <property type="entry name" value="FucI/AraA N-terminal and middle domains"/>
    <property type="match status" value="1"/>
</dbReference>
<feature type="chain" id="PRO_1000139956" description="L-fucose isomerase">
    <location>
        <begin position="1"/>
        <end position="591"/>
    </location>
</feature>
<feature type="active site" description="Proton acceptor" evidence="1">
    <location>
        <position position="337"/>
    </location>
</feature>
<feature type="active site" description="Proton acceptor" evidence="1">
    <location>
        <position position="361"/>
    </location>
</feature>
<feature type="binding site" evidence="1">
    <location>
        <position position="337"/>
    </location>
    <ligand>
        <name>Mn(2+)</name>
        <dbReference type="ChEBI" id="CHEBI:29035"/>
    </ligand>
</feature>
<feature type="binding site" evidence="1">
    <location>
        <position position="361"/>
    </location>
    <ligand>
        <name>Mn(2+)</name>
        <dbReference type="ChEBI" id="CHEBI:29035"/>
    </ligand>
</feature>
<feature type="binding site" evidence="1">
    <location>
        <position position="528"/>
    </location>
    <ligand>
        <name>Mn(2+)</name>
        <dbReference type="ChEBI" id="CHEBI:29035"/>
    </ligand>
</feature>
<reference key="1">
    <citation type="journal article" date="2008" name="PLoS Genet.">
        <title>Complete genome sequence of the N2-fixing broad host range endophyte Klebsiella pneumoniae 342 and virulence predictions verified in mice.</title>
        <authorList>
            <person name="Fouts D.E."/>
            <person name="Tyler H.L."/>
            <person name="DeBoy R.T."/>
            <person name="Daugherty S."/>
            <person name="Ren Q."/>
            <person name="Badger J.H."/>
            <person name="Durkin A.S."/>
            <person name="Huot H."/>
            <person name="Shrivastava S."/>
            <person name="Kothari S."/>
            <person name="Dodson R.J."/>
            <person name="Mohamoud Y."/>
            <person name="Khouri H."/>
            <person name="Roesch L.F.W."/>
            <person name="Krogfelt K.A."/>
            <person name="Struve C."/>
            <person name="Triplett E.W."/>
            <person name="Methe B.A."/>
        </authorList>
    </citation>
    <scope>NUCLEOTIDE SEQUENCE [LARGE SCALE GENOMIC DNA]</scope>
    <source>
        <strain>342</strain>
    </source>
</reference>
<comment type="function">
    <text evidence="1">Converts the aldose L-fucose into the corresponding ketose L-fuculose.</text>
</comment>
<comment type="catalytic activity">
    <reaction evidence="1">
        <text>L-fucose = L-fuculose</text>
        <dbReference type="Rhea" id="RHEA:17233"/>
        <dbReference type="ChEBI" id="CHEBI:2181"/>
        <dbReference type="ChEBI" id="CHEBI:17617"/>
        <dbReference type="EC" id="5.3.1.25"/>
    </reaction>
</comment>
<comment type="cofactor">
    <cofactor evidence="1">
        <name>Mn(2+)</name>
        <dbReference type="ChEBI" id="CHEBI:29035"/>
    </cofactor>
</comment>
<comment type="pathway">
    <text evidence="1">Carbohydrate degradation; L-fucose degradation; L-lactaldehyde and glycerone phosphate from L-fucose: step 1/3.</text>
</comment>
<comment type="subunit">
    <text evidence="1">Homohexamer.</text>
</comment>
<comment type="subcellular location">
    <subcellularLocation>
        <location evidence="1">Cytoplasm</location>
    </subcellularLocation>
</comment>
<comment type="similarity">
    <text evidence="1">Belongs to the L-fucose isomerase family.</text>
</comment>
<name>FUCI_KLEP3</name>
<evidence type="ECO:0000255" key="1">
    <source>
        <dbReference type="HAMAP-Rule" id="MF_01254"/>
    </source>
</evidence>
<gene>
    <name evidence="1" type="primary">fucI</name>
    <name type="ordered locus">KPK_0964</name>
</gene>
<proteinExistence type="inferred from homology"/>
<organism>
    <name type="scientific">Klebsiella pneumoniae (strain 342)</name>
    <dbReference type="NCBI Taxonomy" id="507522"/>
    <lineage>
        <taxon>Bacteria</taxon>
        <taxon>Pseudomonadati</taxon>
        <taxon>Pseudomonadota</taxon>
        <taxon>Gammaproteobacteria</taxon>
        <taxon>Enterobacterales</taxon>
        <taxon>Enterobacteriaceae</taxon>
        <taxon>Klebsiella/Raoultella group</taxon>
        <taxon>Klebsiella</taxon>
        <taxon>Klebsiella pneumoniae complex</taxon>
    </lineage>
</organism>